<accession>Q492W6</accession>
<feature type="chain" id="PRO_0000291464" description="6-phosphogluconolactonase">
    <location>
        <begin position="1"/>
        <end position="337"/>
    </location>
</feature>
<name>6PGL_BLOPB</name>
<organism>
    <name type="scientific">Blochmanniella pennsylvanica (strain BPEN)</name>
    <dbReference type="NCBI Taxonomy" id="291272"/>
    <lineage>
        <taxon>Bacteria</taxon>
        <taxon>Pseudomonadati</taxon>
        <taxon>Pseudomonadota</taxon>
        <taxon>Gammaproteobacteria</taxon>
        <taxon>Enterobacterales</taxon>
        <taxon>Enterobacteriaceae</taxon>
        <taxon>ant endosymbionts</taxon>
        <taxon>Candidatus Blochmanniella</taxon>
    </lineage>
</organism>
<evidence type="ECO:0000255" key="1">
    <source>
        <dbReference type="HAMAP-Rule" id="MF_01605"/>
    </source>
</evidence>
<dbReference type="EC" id="3.1.1.31" evidence="1"/>
<dbReference type="EMBL" id="CP000016">
    <property type="protein sequence ID" value="AAZ40976.1"/>
    <property type="molecule type" value="Genomic_DNA"/>
</dbReference>
<dbReference type="RefSeq" id="WP_011282885.1">
    <property type="nucleotide sequence ID" value="NC_007292.1"/>
</dbReference>
<dbReference type="SMR" id="Q492W6"/>
<dbReference type="STRING" id="291272.BPEN_351"/>
<dbReference type="KEGG" id="bpn:BPEN_351"/>
<dbReference type="eggNOG" id="COG2706">
    <property type="taxonomic scope" value="Bacteria"/>
</dbReference>
<dbReference type="HOGENOM" id="CLU_038716_2_0_6"/>
<dbReference type="OrthoDB" id="9790815at2"/>
<dbReference type="UniPathway" id="UPA00115">
    <property type="reaction ID" value="UER00409"/>
</dbReference>
<dbReference type="Proteomes" id="UP000007794">
    <property type="component" value="Chromosome"/>
</dbReference>
<dbReference type="GO" id="GO:0005829">
    <property type="term" value="C:cytosol"/>
    <property type="evidence" value="ECO:0007669"/>
    <property type="project" value="TreeGrafter"/>
</dbReference>
<dbReference type="GO" id="GO:0017057">
    <property type="term" value="F:6-phosphogluconolactonase activity"/>
    <property type="evidence" value="ECO:0007669"/>
    <property type="project" value="UniProtKB-UniRule"/>
</dbReference>
<dbReference type="GO" id="GO:0006006">
    <property type="term" value="P:glucose metabolic process"/>
    <property type="evidence" value="ECO:0007669"/>
    <property type="project" value="UniProtKB-KW"/>
</dbReference>
<dbReference type="GO" id="GO:0009051">
    <property type="term" value="P:pentose-phosphate shunt, oxidative branch"/>
    <property type="evidence" value="ECO:0007669"/>
    <property type="project" value="UniProtKB-UniRule"/>
</dbReference>
<dbReference type="Gene3D" id="2.130.10.10">
    <property type="entry name" value="YVTN repeat-like/Quinoprotein amine dehydrogenase"/>
    <property type="match status" value="1"/>
</dbReference>
<dbReference type="HAMAP" id="MF_01605">
    <property type="entry name" value="6P_gluconolactonase"/>
    <property type="match status" value="1"/>
</dbReference>
<dbReference type="InterPro" id="IPR022528">
    <property type="entry name" value="6-phosphogluconolactonase_YbhE"/>
</dbReference>
<dbReference type="InterPro" id="IPR050282">
    <property type="entry name" value="Cycloisomerase_2"/>
</dbReference>
<dbReference type="InterPro" id="IPR019405">
    <property type="entry name" value="Lactonase_7-beta_prop"/>
</dbReference>
<dbReference type="InterPro" id="IPR011045">
    <property type="entry name" value="N2O_reductase_N"/>
</dbReference>
<dbReference type="InterPro" id="IPR015943">
    <property type="entry name" value="WD40/YVTN_repeat-like_dom_sf"/>
</dbReference>
<dbReference type="NCBIfam" id="NF008258">
    <property type="entry name" value="PRK11028.1"/>
    <property type="match status" value="1"/>
</dbReference>
<dbReference type="PANTHER" id="PTHR30344:SF1">
    <property type="entry name" value="6-PHOSPHOGLUCONOLACTONASE"/>
    <property type="match status" value="1"/>
</dbReference>
<dbReference type="PANTHER" id="PTHR30344">
    <property type="entry name" value="6-PHOSPHOGLUCONOLACTONASE-RELATED"/>
    <property type="match status" value="1"/>
</dbReference>
<dbReference type="Pfam" id="PF10282">
    <property type="entry name" value="Lactonase"/>
    <property type="match status" value="1"/>
</dbReference>
<dbReference type="SUPFAM" id="SSF50974">
    <property type="entry name" value="Nitrous oxide reductase, N-terminal domain"/>
    <property type="match status" value="1"/>
</dbReference>
<dbReference type="SUPFAM" id="SSF50956">
    <property type="entry name" value="Thermostable phytase (3-phytase)"/>
    <property type="match status" value="1"/>
</dbReference>
<sequence>MIQIIYVASPESQQIHVWKLDSIYGLLELIQVIYTHGQAQPMAVHPNKRFLYVGIRPNFGITTYRIDQIGLLADHGTIGIFSSPTHLISDKKGAFLYCTSYRNNTVSVIPISMSGMLLDSPIQIIEGLLGCHSANIDKFKKLLWVPCLKENAIRLFNINSFGMLTSYDPSIIKINVGSGPRHMIFCDFDCYAYVINELTSTVDVIKYNNFQKIPSIVQTVSIIPKNISINRCWAADIHITPNGRWLYCTDRSINIISCLEISKKTKKLKFVGYQLTEEQPRGFAIDYQGKFLVVAGQKSNCISLYKIDSDNGTLTMLSRYSSGKGPMWVSIITLNCK</sequence>
<reference key="1">
    <citation type="journal article" date="2005" name="Genome Res.">
        <title>Genome sequence of Blochmannia pennsylvanicus indicates parallel evolutionary trends among bacterial mutualists of insects.</title>
        <authorList>
            <person name="Degnan P.H."/>
            <person name="Lazarus A.B."/>
            <person name="Wernegreen J.J."/>
        </authorList>
    </citation>
    <scope>NUCLEOTIDE SEQUENCE [LARGE SCALE GENOMIC DNA]</scope>
    <source>
        <strain>BPEN</strain>
    </source>
</reference>
<protein>
    <recommendedName>
        <fullName evidence="1">6-phosphogluconolactonase</fullName>
        <shortName evidence="1">6-P-gluconolactonase</shortName>
        <ecNumber evidence="1">3.1.1.31</ecNumber>
    </recommendedName>
</protein>
<comment type="function">
    <text evidence="1">Catalyzes the hydrolysis of 6-phosphogluconolactone to 6-phosphogluconate.</text>
</comment>
<comment type="catalytic activity">
    <reaction evidence="1">
        <text>6-phospho-D-glucono-1,5-lactone + H2O = 6-phospho-D-gluconate + H(+)</text>
        <dbReference type="Rhea" id="RHEA:12556"/>
        <dbReference type="ChEBI" id="CHEBI:15377"/>
        <dbReference type="ChEBI" id="CHEBI:15378"/>
        <dbReference type="ChEBI" id="CHEBI:57955"/>
        <dbReference type="ChEBI" id="CHEBI:58759"/>
        <dbReference type="EC" id="3.1.1.31"/>
    </reaction>
</comment>
<comment type="pathway">
    <text evidence="1">Carbohydrate degradation; pentose phosphate pathway; D-ribulose 5-phosphate from D-glucose 6-phosphate (oxidative stage): step 2/3.</text>
</comment>
<comment type="similarity">
    <text evidence="1">Belongs to the cycloisomerase 2 family.</text>
</comment>
<gene>
    <name evidence="1" type="primary">pgl</name>
    <name type="ordered locus">BPEN_351</name>
</gene>
<proteinExistence type="inferred from homology"/>
<keyword id="KW-0119">Carbohydrate metabolism</keyword>
<keyword id="KW-0313">Glucose metabolism</keyword>
<keyword id="KW-0378">Hydrolase</keyword>
<keyword id="KW-1185">Reference proteome</keyword>